<dbReference type="EMBL" id="CU928145">
    <property type="protein sequence ID" value="CAV01107.1"/>
    <property type="molecule type" value="Genomic_DNA"/>
</dbReference>
<dbReference type="RefSeq" id="WP_001076742.1">
    <property type="nucleotide sequence ID" value="NC_011748.1"/>
</dbReference>
<dbReference type="SMR" id="B7LA12"/>
<dbReference type="GeneID" id="75204588"/>
<dbReference type="KEGG" id="eck:EC55989_4393"/>
<dbReference type="HOGENOM" id="CLU_013430_3_0_6"/>
<dbReference type="Proteomes" id="UP000000746">
    <property type="component" value="Chromosome"/>
</dbReference>
<dbReference type="GO" id="GO:0005886">
    <property type="term" value="C:plasma membrane"/>
    <property type="evidence" value="ECO:0007669"/>
    <property type="project" value="UniProtKB-SubCell"/>
</dbReference>
<dbReference type="GO" id="GO:0015086">
    <property type="term" value="F:cadmium ion transmembrane transporter activity"/>
    <property type="evidence" value="ECO:0007669"/>
    <property type="project" value="UniProtKB-UniRule"/>
</dbReference>
<dbReference type="GO" id="GO:0015093">
    <property type="term" value="F:ferrous iron transmembrane transporter activity"/>
    <property type="evidence" value="ECO:0007669"/>
    <property type="project" value="TreeGrafter"/>
</dbReference>
<dbReference type="GO" id="GO:0046872">
    <property type="term" value="F:metal ion binding"/>
    <property type="evidence" value="ECO:0007669"/>
    <property type="project" value="UniProtKB-KW"/>
</dbReference>
<dbReference type="GO" id="GO:0015341">
    <property type="term" value="F:zinc efflux antiporter activity"/>
    <property type="evidence" value="ECO:0007669"/>
    <property type="project" value="TreeGrafter"/>
</dbReference>
<dbReference type="GO" id="GO:0006882">
    <property type="term" value="P:intracellular zinc ion homeostasis"/>
    <property type="evidence" value="ECO:0007669"/>
    <property type="project" value="TreeGrafter"/>
</dbReference>
<dbReference type="FunFam" id="1.20.1510.10:FF:000001">
    <property type="entry name" value="Ferrous-iron efflux pump FieF"/>
    <property type="match status" value="1"/>
</dbReference>
<dbReference type="FunFam" id="3.30.70.1350:FF:000002">
    <property type="entry name" value="Ferrous-iron efflux pump FieF"/>
    <property type="match status" value="1"/>
</dbReference>
<dbReference type="Gene3D" id="1.20.1510.10">
    <property type="entry name" value="Cation efflux protein transmembrane domain"/>
    <property type="match status" value="1"/>
</dbReference>
<dbReference type="Gene3D" id="3.30.70.1350">
    <property type="entry name" value="Cation efflux protein, cytoplasmic domain"/>
    <property type="match status" value="1"/>
</dbReference>
<dbReference type="HAMAP" id="MF_01425">
    <property type="entry name" value="Cation_efflux_FieF"/>
    <property type="match status" value="1"/>
</dbReference>
<dbReference type="InterPro" id="IPR002524">
    <property type="entry name" value="Cation_efflux"/>
</dbReference>
<dbReference type="InterPro" id="IPR027470">
    <property type="entry name" value="Cation_efflux_CTD"/>
</dbReference>
<dbReference type="InterPro" id="IPR036837">
    <property type="entry name" value="Cation_efflux_CTD_sf"/>
</dbReference>
<dbReference type="InterPro" id="IPR023783">
    <property type="entry name" value="Cation_efflux_FieF"/>
</dbReference>
<dbReference type="InterPro" id="IPR027469">
    <property type="entry name" value="Cation_efflux_TMD_sf"/>
</dbReference>
<dbReference type="InterPro" id="IPR050291">
    <property type="entry name" value="CDF_Transporter"/>
</dbReference>
<dbReference type="NCBIfam" id="TIGR01297">
    <property type="entry name" value="CDF"/>
    <property type="match status" value="1"/>
</dbReference>
<dbReference type="NCBIfam" id="NF007064">
    <property type="entry name" value="PRK09509.1"/>
    <property type="match status" value="1"/>
</dbReference>
<dbReference type="PANTHER" id="PTHR43840:SF41">
    <property type="entry name" value="CATION-EFFLUX PUMP FIEF"/>
    <property type="match status" value="1"/>
</dbReference>
<dbReference type="PANTHER" id="PTHR43840">
    <property type="entry name" value="MITOCHONDRIAL METAL TRANSPORTER 1-RELATED"/>
    <property type="match status" value="1"/>
</dbReference>
<dbReference type="Pfam" id="PF01545">
    <property type="entry name" value="Cation_efflux"/>
    <property type="match status" value="1"/>
</dbReference>
<dbReference type="Pfam" id="PF16916">
    <property type="entry name" value="ZT_dimer"/>
    <property type="match status" value="1"/>
</dbReference>
<dbReference type="SUPFAM" id="SSF160240">
    <property type="entry name" value="Cation efflux protein cytoplasmic domain-like"/>
    <property type="match status" value="1"/>
</dbReference>
<dbReference type="SUPFAM" id="SSF161111">
    <property type="entry name" value="Cation efflux protein transmembrane domain-like"/>
    <property type="match status" value="1"/>
</dbReference>
<evidence type="ECO:0000255" key="1">
    <source>
        <dbReference type="HAMAP-Rule" id="MF_01425"/>
    </source>
</evidence>
<name>FIEF_ECO55</name>
<gene>
    <name evidence="1" type="primary">fieF</name>
    <name type="ordered locus">EC55989_4393</name>
</gene>
<feature type="chain" id="PRO_1000184873" description="Cation-efflux pump FieF">
    <location>
        <begin position="1"/>
        <end position="300"/>
    </location>
</feature>
<feature type="transmembrane region" description="Helical" evidence="1">
    <location>
        <begin position="12"/>
        <end position="32"/>
    </location>
</feature>
<feature type="transmembrane region" description="Helical" evidence="1">
    <location>
        <begin position="39"/>
        <end position="59"/>
    </location>
</feature>
<feature type="transmembrane region" description="Helical" evidence="1">
    <location>
        <begin position="82"/>
        <end position="102"/>
    </location>
</feature>
<feature type="transmembrane region" description="Helical" evidence="1">
    <location>
        <begin position="114"/>
        <end position="134"/>
    </location>
</feature>
<feature type="transmembrane region" description="Helical" evidence="1">
    <location>
        <begin position="156"/>
        <end position="176"/>
    </location>
</feature>
<feature type="transmembrane region" description="Helical" evidence="1">
    <location>
        <begin position="178"/>
        <end position="198"/>
    </location>
</feature>
<feature type="binding site" evidence="1">
    <location>
        <position position="45"/>
    </location>
    <ligand>
        <name>Zn(2+)</name>
        <dbReference type="ChEBI" id="CHEBI:29105"/>
    </ligand>
</feature>
<feature type="binding site" evidence="1">
    <location>
        <position position="49"/>
    </location>
    <ligand>
        <name>Zn(2+)</name>
        <dbReference type="ChEBI" id="CHEBI:29105"/>
    </ligand>
</feature>
<feature type="binding site" evidence="1">
    <location>
        <position position="153"/>
    </location>
    <ligand>
        <name>Zn(2+)</name>
        <dbReference type="ChEBI" id="CHEBI:29105"/>
    </ligand>
</feature>
<feature type="binding site" evidence="1">
    <location>
        <position position="157"/>
    </location>
    <ligand>
        <name>Zn(2+)</name>
        <dbReference type="ChEBI" id="CHEBI:29105"/>
    </ligand>
</feature>
<proteinExistence type="inferred from homology"/>
<reference key="1">
    <citation type="journal article" date="2009" name="PLoS Genet.">
        <title>Organised genome dynamics in the Escherichia coli species results in highly diverse adaptive paths.</title>
        <authorList>
            <person name="Touchon M."/>
            <person name="Hoede C."/>
            <person name="Tenaillon O."/>
            <person name="Barbe V."/>
            <person name="Baeriswyl S."/>
            <person name="Bidet P."/>
            <person name="Bingen E."/>
            <person name="Bonacorsi S."/>
            <person name="Bouchier C."/>
            <person name="Bouvet O."/>
            <person name="Calteau A."/>
            <person name="Chiapello H."/>
            <person name="Clermont O."/>
            <person name="Cruveiller S."/>
            <person name="Danchin A."/>
            <person name="Diard M."/>
            <person name="Dossat C."/>
            <person name="Karoui M.E."/>
            <person name="Frapy E."/>
            <person name="Garry L."/>
            <person name="Ghigo J.M."/>
            <person name="Gilles A.M."/>
            <person name="Johnson J."/>
            <person name="Le Bouguenec C."/>
            <person name="Lescat M."/>
            <person name="Mangenot S."/>
            <person name="Martinez-Jehanne V."/>
            <person name="Matic I."/>
            <person name="Nassif X."/>
            <person name="Oztas S."/>
            <person name="Petit M.A."/>
            <person name="Pichon C."/>
            <person name="Rouy Z."/>
            <person name="Ruf C.S."/>
            <person name="Schneider D."/>
            <person name="Tourret J."/>
            <person name="Vacherie B."/>
            <person name="Vallenet D."/>
            <person name="Medigue C."/>
            <person name="Rocha E.P.C."/>
            <person name="Denamur E."/>
        </authorList>
    </citation>
    <scope>NUCLEOTIDE SEQUENCE [LARGE SCALE GENOMIC DNA]</scope>
    <source>
        <strain>55989 / EAEC</strain>
    </source>
</reference>
<keyword id="KW-0997">Cell inner membrane</keyword>
<keyword id="KW-1003">Cell membrane</keyword>
<keyword id="KW-0406">Ion transport</keyword>
<keyword id="KW-0408">Iron</keyword>
<keyword id="KW-0410">Iron transport</keyword>
<keyword id="KW-0472">Membrane</keyword>
<keyword id="KW-0479">Metal-binding</keyword>
<keyword id="KW-1185">Reference proteome</keyword>
<keyword id="KW-0812">Transmembrane</keyword>
<keyword id="KW-1133">Transmembrane helix</keyword>
<keyword id="KW-0813">Transport</keyword>
<keyword id="KW-0862">Zinc</keyword>
<keyword id="KW-0864">Zinc transport</keyword>
<sequence length="300" mass="32927">MNQSYGRLVSRAAIAATAMASLLLLIKIFAWWYTGSVSILAALVDSLVDIGASLTNLLVVRYSLQPADDNHSFGHGKAESLAALAQSMFISGSALFLFLTGIQHLISPTPMTDPGVGVIVTIVALICTIILVSFQRWVVRRTQSQAVRADMLHYQSDVMMNGAILLALGLSWYGWHRADALFALGIGIYILYSALRMGYEAVQSLLDRALPDEERQEIIDIVTSWPGVSGAHDLRTRQSGPTRFIQIHLEMEDSLPLVQAHMVADQVEQAILRRFPGSDVIIHQDPCSVVPREGKRSMLS</sequence>
<accession>B7LA12</accession>
<comment type="function">
    <text evidence="1">Divalent metal cation transporter which exports Zn(2+), Cd(2+) and possibly Fe(2+). May be involved in zinc and iron detoxification by efflux.</text>
</comment>
<comment type="catalytic activity">
    <reaction evidence="1">
        <text>Zn(2+)(in) + H(+)(out) = Zn(2+)(out) + H(+)(in)</text>
        <dbReference type="Rhea" id="RHEA:28839"/>
        <dbReference type="ChEBI" id="CHEBI:15378"/>
        <dbReference type="ChEBI" id="CHEBI:29105"/>
    </reaction>
</comment>
<comment type="catalytic activity">
    <reaction evidence="1">
        <text>Cd(2+)(in) + H(+)(out) = Cd(2+)(out) + H(+)(in)</text>
        <dbReference type="Rhea" id="RHEA:28739"/>
        <dbReference type="ChEBI" id="CHEBI:15378"/>
        <dbReference type="ChEBI" id="CHEBI:48775"/>
    </reaction>
</comment>
<comment type="catalytic activity">
    <reaction evidence="1">
        <text>Fe(2+)(in) + H(+)(out) = Fe(2+)(out) + H(+)(in)</text>
        <dbReference type="Rhea" id="RHEA:29439"/>
        <dbReference type="ChEBI" id="CHEBI:15378"/>
        <dbReference type="ChEBI" id="CHEBI:29033"/>
    </reaction>
</comment>
<comment type="subunit">
    <text evidence="1">Homodimer.</text>
</comment>
<comment type="subcellular location">
    <subcellularLocation>
        <location evidence="1">Cell inner membrane</location>
        <topology evidence="1">Multi-pass membrane protein</topology>
    </subcellularLocation>
</comment>
<comment type="similarity">
    <text evidence="1">Belongs to the cation diffusion facilitator (CDF) transporter (TC 2.A.4) family. FieF subfamily.</text>
</comment>
<organism>
    <name type="scientific">Escherichia coli (strain 55989 / EAEC)</name>
    <dbReference type="NCBI Taxonomy" id="585055"/>
    <lineage>
        <taxon>Bacteria</taxon>
        <taxon>Pseudomonadati</taxon>
        <taxon>Pseudomonadota</taxon>
        <taxon>Gammaproteobacteria</taxon>
        <taxon>Enterobacterales</taxon>
        <taxon>Enterobacteriaceae</taxon>
        <taxon>Escherichia</taxon>
    </lineage>
</organism>
<protein>
    <recommendedName>
        <fullName evidence="1">Cation-efflux pump FieF</fullName>
    </recommendedName>
</protein>